<name>RL24_RICAE</name>
<organism>
    <name type="scientific">Rickettsia africae (strain ESF-5)</name>
    <dbReference type="NCBI Taxonomy" id="347255"/>
    <lineage>
        <taxon>Bacteria</taxon>
        <taxon>Pseudomonadati</taxon>
        <taxon>Pseudomonadota</taxon>
        <taxon>Alphaproteobacteria</taxon>
        <taxon>Rickettsiales</taxon>
        <taxon>Rickettsiaceae</taxon>
        <taxon>Rickettsieae</taxon>
        <taxon>Rickettsia</taxon>
        <taxon>spotted fever group</taxon>
    </lineage>
</organism>
<feature type="chain" id="PRO_1000214554" description="Large ribosomal subunit protein uL24">
    <location>
        <begin position="1"/>
        <end position="109"/>
    </location>
</feature>
<protein>
    <recommendedName>
        <fullName evidence="1">Large ribosomal subunit protein uL24</fullName>
    </recommendedName>
    <alternativeName>
        <fullName evidence="2">50S ribosomal protein L24</fullName>
    </alternativeName>
</protein>
<sequence length="109" mass="11824">MIKLKVKKGDEVVVITGKHKGKKGKILKVFPEDSKVIVSGVNVVKKHTKSNQMSEGGIITKELPIHISNIAHIDPKTGNPTKVAFKFLEDGSKVRVAKKSGEIIGKEGK</sequence>
<keyword id="KW-0687">Ribonucleoprotein</keyword>
<keyword id="KW-0689">Ribosomal protein</keyword>
<keyword id="KW-0694">RNA-binding</keyword>
<keyword id="KW-0699">rRNA-binding</keyword>
<proteinExistence type="inferred from homology"/>
<accession>C3PP96</accession>
<reference key="1">
    <citation type="journal article" date="2009" name="BMC Genomics">
        <title>Analysis of the Rickettsia africae genome reveals that virulence acquisition in Rickettsia species may be explained by genome reduction.</title>
        <authorList>
            <person name="Fournier P.-E."/>
            <person name="El Karkouri K."/>
            <person name="Leroy Q."/>
            <person name="Robert C."/>
            <person name="Giumelli B."/>
            <person name="Renesto P."/>
            <person name="Socolovschi C."/>
            <person name="Parola P."/>
            <person name="Audic S."/>
            <person name="Raoult D."/>
        </authorList>
    </citation>
    <scope>NUCLEOTIDE SEQUENCE [LARGE SCALE GENOMIC DNA]</scope>
    <source>
        <strain>ESF-5</strain>
    </source>
</reference>
<dbReference type="EMBL" id="CP001612">
    <property type="protein sequence ID" value="ACP53756.1"/>
    <property type="molecule type" value="Genomic_DNA"/>
</dbReference>
<dbReference type="RefSeq" id="WP_004997814.1">
    <property type="nucleotide sequence ID" value="NC_012633.1"/>
</dbReference>
<dbReference type="SMR" id="C3PP96"/>
<dbReference type="GeneID" id="95361475"/>
<dbReference type="KEGG" id="raf:RAF_ORF0901"/>
<dbReference type="HOGENOM" id="CLU_093315_2_0_5"/>
<dbReference type="Proteomes" id="UP000002305">
    <property type="component" value="Chromosome"/>
</dbReference>
<dbReference type="GO" id="GO:1990904">
    <property type="term" value="C:ribonucleoprotein complex"/>
    <property type="evidence" value="ECO:0007669"/>
    <property type="project" value="UniProtKB-KW"/>
</dbReference>
<dbReference type="GO" id="GO:0005840">
    <property type="term" value="C:ribosome"/>
    <property type="evidence" value="ECO:0007669"/>
    <property type="project" value="UniProtKB-KW"/>
</dbReference>
<dbReference type="GO" id="GO:0019843">
    <property type="term" value="F:rRNA binding"/>
    <property type="evidence" value="ECO:0007669"/>
    <property type="project" value="UniProtKB-UniRule"/>
</dbReference>
<dbReference type="GO" id="GO:0003735">
    <property type="term" value="F:structural constituent of ribosome"/>
    <property type="evidence" value="ECO:0007669"/>
    <property type="project" value="InterPro"/>
</dbReference>
<dbReference type="GO" id="GO:0006412">
    <property type="term" value="P:translation"/>
    <property type="evidence" value="ECO:0007669"/>
    <property type="project" value="UniProtKB-UniRule"/>
</dbReference>
<dbReference type="CDD" id="cd06089">
    <property type="entry name" value="KOW_RPL26"/>
    <property type="match status" value="1"/>
</dbReference>
<dbReference type="FunFam" id="2.30.30.30:FF:000004">
    <property type="entry name" value="50S ribosomal protein L24"/>
    <property type="match status" value="1"/>
</dbReference>
<dbReference type="Gene3D" id="2.30.30.30">
    <property type="match status" value="1"/>
</dbReference>
<dbReference type="HAMAP" id="MF_01326_B">
    <property type="entry name" value="Ribosomal_uL24_B"/>
    <property type="match status" value="1"/>
</dbReference>
<dbReference type="InterPro" id="IPR005824">
    <property type="entry name" value="KOW"/>
</dbReference>
<dbReference type="InterPro" id="IPR014722">
    <property type="entry name" value="Rib_uL2_dom2"/>
</dbReference>
<dbReference type="InterPro" id="IPR003256">
    <property type="entry name" value="Ribosomal_uL24"/>
</dbReference>
<dbReference type="InterPro" id="IPR005825">
    <property type="entry name" value="Ribosomal_uL24_CS"/>
</dbReference>
<dbReference type="InterPro" id="IPR041988">
    <property type="entry name" value="Ribosomal_uL24_KOW"/>
</dbReference>
<dbReference type="InterPro" id="IPR008991">
    <property type="entry name" value="Translation_prot_SH3-like_sf"/>
</dbReference>
<dbReference type="NCBIfam" id="TIGR01079">
    <property type="entry name" value="rplX_bact"/>
    <property type="match status" value="1"/>
</dbReference>
<dbReference type="PANTHER" id="PTHR12903">
    <property type="entry name" value="MITOCHONDRIAL RIBOSOMAL PROTEIN L24"/>
    <property type="match status" value="1"/>
</dbReference>
<dbReference type="Pfam" id="PF00467">
    <property type="entry name" value="KOW"/>
    <property type="match status" value="1"/>
</dbReference>
<dbReference type="Pfam" id="PF17136">
    <property type="entry name" value="ribosomal_L24"/>
    <property type="match status" value="1"/>
</dbReference>
<dbReference type="SMART" id="SM00739">
    <property type="entry name" value="KOW"/>
    <property type="match status" value="1"/>
</dbReference>
<dbReference type="SUPFAM" id="SSF50104">
    <property type="entry name" value="Translation proteins SH3-like domain"/>
    <property type="match status" value="1"/>
</dbReference>
<dbReference type="PROSITE" id="PS01108">
    <property type="entry name" value="RIBOSOMAL_L24"/>
    <property type="match status" value="1"/>
</dbReference>
<comment type="function">
    <text evidence="1">One of two assembly initiator proteins, it binds directly to the 5'-end of the 23S rRNA, where it nucleates assembly of the 50S subunit.</text>
</comment>
<comment type="function">
    <text evidence="1">One of the proteins that surrounds the polypeptide exit tunnel on the outside of the subunit.</text>
</comment>
<comment type="subunit">
    <text evidence="1">Part of the 50S ribosomal subunit.</text>
</comment>
<comment type="similarity">
    <text evidence="1">Belongs to the universal ribosomal protein uL24 family.</text>
</comment>
<evidence type="ECO:0000255" key="1">
    <source>
        <dbReference type="HAMAP-Rule" id="MF_01326"/>
    </source>
</evidence>
<evidence type="ECO:0000305" key="2"/>
<gene>
    <name evidence="1" type="primary">rplX</name>
    <name type="ordered locus">RAF_ORF0901</name>
</gene>